<accession>Q7VKN1</accession>
<reference key="1">
    <citation type="submission" date="2003-06" db="EMBL/GenBank/DDBJ databases">
        <title>The complete genome sequence of Haemophilus ducreyi.</title>
        <authorList>
            <person name="Munson R.S. Jr."/>
            <person name="Ray W.C."/>
            <person name="Mahairas G."/>
            <person name="Sabo P."/>
            <person name="Mungur R."/>
            <person name="Johnson L."/>
            <person name="Nguyen D."/>
            <person name="Wang J."/>
            <person name="Forst C."/>
            <person name="Hood L."/>
        </authorList>
    </citation>
    <scope>NUCLEOTIDE SEQUENCE [LARGE SCALE GENOMIC DNA]</scope>
    <source>
        <strain>35000HP / ATCC 700724</strain>
    </source>
</reference>
<comment type="function">
    <text evidence="1">Catalyzes the reversible isomerization-deamination of glucosamine 6-phosphate (GlcN6P) to form fructose 6-phosphate (Fru6P) and ammonium ion.</text>
</comment>
<comment type="catalytic activity">
    <reaction evidence="1">
        <text>alpha-D-glucosamine 6-phosphate + H2O = beta-D-fructose 6-phosphate + NH4(+)</text>
        <dbReference type="Rhea" id="RHEA:12172"/>
        <dbReference type="ChEBI" id="CHEBI:15377"/>
        <dbReference type="ChEBI" id="CHEBI:28938"/>
        <dbReference type="ChEBI" id="CHEBI:57634"/>
        <dbReference type="ChEBI" id="CHEBI:75989"/>
        <dbReference type="EC" id="3.5.99.6"/>
    </reaction>
</comment>
<comment type="activity regulation">
    <text evidence="1">Allosterically activated by N-acetylglucosamine 6-phosphate (GlcNAc6P).</text>
</comment>
<comment type="pathway">
    <text evidence="1">Amino-sugar metabolism; N-acetylneuraminate degradation; D-fructose 6-phosphate from N-acetylneuraminate: step 5/5.</text>
</comment>
<comment type="subunit">
    <text evidence="1">Homohexamer.</text>
</comment>
<comment type="similarity">
    <text evidence="1">Belongs to the glucosamine/galactosamine-6-phosphate isomerase family. NagB subfamily.</text>
</comment>
<dbReference type="EC" id="3.5.99.6" evidence="1"/>
<dbReference type="EMBL" id="AE017143">
    <property type="protein sequence ID" value="AAP96591.1"/>
    <property type="molecule type" value="Genomic_DNA"/>
</dbReference>
<dbReference type="RefSeq" id="WP_010945620.1">
    <property type="nucleotide sequence ID" value="NC_002940.2"/>
</dbReference>
<dbReference type="SMR" id="Q7VKN1"/>
<dbReference type="STRING" id="233412.HD_1847"/>
<dbReference type="KEGG" id="hdu:HD_1847"/>
<dbReference type="eggNOG" id="COG0363">
    <property type="taxonomic scope" value="Bacteria"/>
</dbReference>
<dbReference type="HOGENOM" id="CLU_049611_0_1_6"/>
<dbReference type="OrthoDB" id="9791139at2"/>
<dbReference type="UniPathway" id="UPA00629">
    <property type="reaction ID" value="UER00684"/>
</dbReference>
<dbReference type="Proteomes" id="UP000001022">
    <property type="component" value="Chromosome"/>
</dbReference>
<dbReference type="GO" id="GO:0005737">
    <property type="term" value="C:cytoplasm"/>
    <property type="evidence" value="ECO:0007669"/>
    <property type="project" value="TreeGrafter"/>
</dbReference>
<dbReference type="GO" id="GO:0004342">
    <property type="term" value="F:glucosamine-6-phosphate deaminase activity"/>
    <property type="evidence" value="ECO:0007669"/>
    <property type="project" value="UniProtKB-UniRule"/>
</dbReference>
<dbReference type="GO" id="GO:0042802">
    <property type="term" value="F:identical protein binding"/>
    <property type="evidence" value="ECO:0007669"/>
    <property type="project" value="TreeGrafter"/>
</dbReference>
<dbReference type="GO" id="GO:0005975">
    <property type="term" value="P:carbohydrate metabolic process"/>
    <property type="evidence" value="ECO:0007669"/>
    <property type="project" value="InterPro"/>
</dbReference>
<dbReference type="GO" id="GO:0006043">
    <property type="term" value="P:glucosamine catabolic process"/>
    <property type="evidence" value="ECO:0007669"/>
    <property type="project" value="TreeGrafter"/>
</dbReference>
<dbReference type="GO" id="GO:0006046">
    <property type="term" value="P:N-acetylglucosamine catabolic process"/>
    <property type="evidence" value="ECO:0007669"/>
    <property type="project" value="TreeGrafter"/>
</dbReference>
<dbReference type="GO" id="GO:0019262">
    <property type="term" value="P:N-acetylneuraminate catabolic process"/>
    <property type="evidence" value="ECO:0007669"/>
    <property type="project" value="UniProtKB-UniRule"/>
</dbReference>
<dbReference type="CDD" id="cd01399">
    <property type="entry name" value="GlcN6P_deaminase"/>
    <property type="match status" value="1"/>
</dbReference>
<dbReference type="FunFam" id="3.40.50.1360:FF:000002">
    <property type="entry name" value="Glucosamine-6-phosphate deaminase"/>
    <property type="match status" value="1"/>
</dbReference>
<dbReference type="Gene3D" id="3.40.50.1360">
    <property type="match status" value="1"/>
</dbReference>
<dbReference type="HAMAP" id="MF_01241">
    <property type="entry name" value="GlcN6P_deamin"/>
    <property type="match status" value="1"/>
</dbReference>
<dbReference type="InterPro" id="IPR006148">
    <property type="entry name" value="Glc/Gal-6P_isomerase"/>
</dbReference>
<dbReference type="InterPro" id="IPR004547">
    <property type="entry name" value="Glucosamine6P_isomerase"/>
</dbReference>
<dbReference type="InterPro" id="IPR018321">
    <property type="entry name" value="Glucosamine6P_isomerase_CS"/>
</dbReference>
<dbReference type="InterPro" id="IPR037171">
    <property type="entry name" value="NagB/RpiA_transferase-like"/>
</dbReference>
<dbReference type="NCBIfam" id="TIGR00502">
    <property type="entry name" value="nagB"/>
    <property type="match status" value="1"/>
</dbReference>
<dbReference type="PANTHER" id="PTHR11280">
    <property type="entry name" value="GLUCOSAMINE-6-PHOSPHATE ISOMERASE"/>
    <property type="match status" value="1"/>
</dbReference>
<dbReference type="PANTHER" id="PTHR11280:SF5">
    <property type="entry name" value="GLUCOSAMINE-6-PHOSPHATE ISOMERASE"/>
    <property type="match status" value="1"/>
</dbReference>
<dbReference type="Pfam" id="PF01182">
    <property type="entry name" value="Glucosamine_iso"/>
    <property type="match status" value="1"/>
</dbReference>
<dbReference type="SUPFAM" id="SSF100950">
    <property type="entry name" value="NagB/RpiA/CoA transferase-like"/>
    <property type="match status" value="1"/>
</dbReference>
<dbReference type="PROSITE" id="PS01161">
    <property type="entry name" value="GLC_GALNAC_ISOMERASE"/>
    <property type="match status" value="1"/>
</dbReference>
<gene>
    <name evidence="1" type="primary">nagB</name>
    <name type="ordered locus">HD_1847</name>
</gene>
<protein>
    <recommendedName>
        <fullName evidence="1">Glucosamine-6-phosphate deaminase</fullName>
        <ecNumber evidence="1">3.5.99.6</ecNumber>
    </recommendedName>
    <alternativeName>
        <fullName evidence="1">GlcN6P deaminase</fullName>
        <shortName evidence="1">GNPDA</shortName>
    </alternativeName>
    <alternativeName>
        <fullName evidence="1">Glucosamine-6-phosphate isomerase</fullName>
    </alternativeName>
</protein>
<proteinExistence type="inferred from homology"/>
<evidence type="ECO:0000255" key="1">
    <source>
        <dbReference type="HAMAP-Rule" id="MF_01241"/>
    </source>
</evidence>
<keyword id="KW-0021">Allosteric enzyme</keyword>
<keyword id="KW-0119">Carbohydrate metabolism</keyword>
<keyword id="KW-0378">Hydrolase</keyword>
<keyword id="KW-1185">Reference proteome</keyword>
<sequence>MRLIPLKNDQQVAKWAASYIAQRINQFKPSAERPFVLGLPTGGTPLQTYQELIKLYQAGEVSFKYVVTFNMDEYVGLAQDHPESYHSFMHNNFFKHIDIQAQNINILDGNTDDHQQECHRYEEKIKYYGKIHLFMGGVGIDGHIAFNEPASSLGSRTRIKTLTEDTLIANSRFFNNDISQVPKYALTIGVATLLDAEEIMLLITGYNKALALQAGVEGSVNHLWTVSALQLHERSIIVCDEPATQELKVKTVKYFTQLEAQEIASVC</sequence>
<feature type="chain" id="PRO_0000160148" description="Glucosamine-6-phosphate deaminase">
    <location>
        <begin position="1"/>
        <end position="267"/>
    </location>
</feature>
<feature type="active site" description="Proton acceptor; for enolization step" evidence="1">
    <location>
        <position position="72"/>
    </location>
</feature>
<feature type="active site" description="For ring-opening step" evidence="1">
    <location>
        <position position="141"/>
    </location>
</feature>
<feature type="active site" description="Proton acceptor; for ring-opening step" evidence="1">
    <location>
        <position position="143"/>
    </location>
</feature>
<feature type="active site" description="For ring-opening step" evidence="1">
    <location>
        <position position="148"/>
    </location>
</feature>
<feature type="site" description="Part of the allosteric site" evidence="1">
    <location>
        <position position="151"/>
    </location>
</feature>
<feature type="site" description="Part of the allosteric site" evidence="1">
    <location>
        <position position="158"/>
    </location>
</feature>
<feature type="site" description="Part of the allosteric site" evidence="1">
    <location>
        <position position="160"/>
    </location>
</feature>
<feature type="site" description="Part of the allosteric site" evidence="1">
    <location>
        <position position="161"/>
    </location>
</feature>
<feature type="site" description="Part of the allosteric site" evidence="1">
    <location>
        <position position="254"/>
    </location>
</feature>
<name>NAGB_HAEDU</name>
<organism>
    <name type="scientific">Haemophilus ducreyi (strain 35000HP / ATCC 700724)</name>
    <dbReference type="NCBI Taxonomy" id="233412"/>
    <lineage>
        <taxon>Bacteria</taxon>
        <taxon>Pseudomonadati</taxon>
        <taxon>Pseudomonadota</taxon>
        <taxon>Gammaproteobacteria</taxon>
        <taxon>Pasteurellales</taxon>
        <taxon>Pasteurellaceae</taxon>
        <taxon>Haemophilus</taxon>
    </lineage>
</organism>